<dbReference type="EMBL" id="AF198100">
    <property type="protein sequence ID" value="AAF44574.1"/>
    <property type="molecule type" value="Genomic_DNA"/>
</dbReference>
<dbReference type="RefSeq" id="NP_039193.1">
    <property type="nucleotide sequence ID" value="NC_002188.1"/>
</dbReference>
<dbReference type="SMR" id="Q9J505"/>
<dbReference type="GeneID" id="1486802"/>
<dbReference type="KEGG" id="vg:1486802"/>
<dbReference type="Proteomes" id="UP000008597">
    <property type="component" value="Segment"/>
</dbReference>
<dbReference type="GO" id="GO:0051059">
    <property type="term" value="F:NF-kappaB binding"/>
    <property type="evidence" value="ECO:0007669"/>
    <property type="project" value="TreeGrafter"/>
</dbReference>
<dbReference type="GO" id="GO:0071356">
    <property type="term" value="P:cellular response to tumor necrosis factor"/>
    <property type="evidence" value="ECO:0007669"/>
    <property type="project" value="TreeGrafter"/>
</dbReference>
<dbReference type="Gene3D" id="1.25.40.20">
    <property type="entry name" value="Ankyrin repeat-containing domain"/>
    <property type="match status" value="2"/>
</dbReference>
<dbReference type="InterPro" id="IPR002110">
    <property type="entry name" value="Ankyrin_rpt"/>
</dbReference>
<dbReference type="InterPro" id="IPR036770">
    <property type="entry name" value="Ankyrin_rpt-contain_sf"/>
</dbReference>
<dbReference type="InterPro" id="IPR051070">
    <property type="entry name" value="NF-kappa-B_inhibitor"/>
</dbReference>
<dbReference type="PANTHER" id="PTHR46680">
    <property type="entry name" value="NF-KAPPA-B INHIBITOR ALPHA"/>
    <property type="match status" value="1"/>
</dbReference>
<dbReference type="PANTHER" id="PTHR46680:SF3">
    <property type="entry name" value="NF-KAPPA-B INHIBITOR CACTUS"/>
    <property type="match status" value="1"/>
</dbReference>
<dbReference type="Pfam" id="PF12796">
    <property type="entry name" value="Ank_2"/>
    <property type="match status" value="1"/>
</dbReference>
<dbReference type="Pfam" id="PF13857">
    <property type="entry name" value="Ank_5"/>
    <property type="match status" value="1"/>
</dbReference>
<dbReference type="SMART" id="SM00248">
    <property type="entry name" value="ANK"/>
    <property type="match status" value="3"/>
</dbReference>
<dbReference type="SUPFAM" id="SSF48403">
    <property type="entry name" value="Ankyrin repeat"/>
    <property type="match status" value="1"/>
</dbReference>
<dbReference type="PROSITE" id="PS50297">
    <property type="entry name" value="ANK_REP_REGION"/>
    <property type="match status" value="1"/>
</dbReference>
<dbReference type="PROSITE" id="PS50088">
    <property type="entry name" value="ANK_REPEAT"/>
    <property type="match status" value="2"/>
</dbReference>
<organismHost>
    <name type="scientific">Vertebrata</name>
    <dbReference type="NCBI Taxonomy" id="7742"/>
</organismHost>
<proteinExistence type="predicted"/>
<gene>
    <name type="ordered locus">FPV230</name>
</gene>
<sequence length="188" mass="21493">MENELKLYYAVSSQNENLVIQLLNKGYNPNAINRFKYMIPLHKAVECRNVDITKHLLSNGADANVRDFLGLGVFHILSMFSSLPELKDILHNTEGTFVLCKYNYAPLEEDYEVKTLEIARMLFISKANINMTSKLGSTPLHIASKYNNKTMVKFFLERGADINILDSNNNTPLIYAVCSVIRLYLKCY</sequence>
<reference key="1">
    <citation type="journal article" date="2000" name="J. Virol.">
        <title>The genome of fowlpox virus.</title>
        <authorList>
            <person name="Afonso C.L."/>
            <person name="Tulman E.R."/>
            <person name="Lu Z."/>
            <person name="Zsak L."/>
            <person name="Kutish G.F."/>
            <person name="Rock D.L."/>
        </authorList>
    </citation>
    <scope>NUCLEOTIDE SEQUENCE [LARGE SCALE GENOMIC DNA]</scope>
</reference>
<protein>
    <recommendedName>
        <fullName>Putative ankyrin repeat protein FPV230</fullName>
    </recommendedName>
</protein>
<keyword id="KW-0040">ANK repeat</keyword>
<keyword id="KW-1185">Reference proteome</keyword>
<keyword id="KW-0677">Repeat</keyword>
<name>V230_FOWPN</name>
<feature type="chain" id="PRO_0000067121" description="Putative ankyrin repeat protein FPV230">
    <location>
        <begin position="1"/>
        <end position="188"/>
    </location>
</feature>
<feature type="repeat" description="ANK 1">
    <location>
        <begin position="2"/>
        <end position="31"/>
    </location>
</feature>
<feature type="repeat" description="ANK 2">
    <location>
        <begin position="36"/>
        <end position="65"/>
    </location>
</feature>
<feature type="repeat" description="ANK 3">
    <location>
        <begin position="135"/>
        <end position="164"/>
    </location>
</feature>
<feature type="repeat" description="ANK 4">
    <location>
        <begin position="168"/>
        <end position="187"/>
    </location>
</feature>
<accession>Q9J505</accession>
<organism>
    <name type="scientific">Fowlpox virus (strain NVSL)</name>
    <name type="common">FPV</name>
    <dbReference type="NCBI Taxonomy" id="928301"/>
    <lineage>
        <taxon>Viruses</taxon>
        <taxon>Varidnaviria</taxon>
        <taxon>Bamfordvirae</taxon>
        <taxon>Nucleocytoviricota</taxon>
        <taxon>Pokkesviricetes</taxon>
        <taxon>Chitovirales</taxon>
        <taxon>Poxviridae</taxon>
        <taxon>Chordopoxvirinae</taxon>
        <taxon>Avipoxvirus</taxon>
        <taxon>Fowlpox virus</taxon>
    </lineage>
</organism>